<gene>
    <name type="primary">rps3</name>
</gene>
<dbReference type="EMBL" id="AB237912">
    <property type="protein sequence ID" value="BAE46693.1"/>
    <property type="molecule type" value="Genomic_DNA"/>
</dbReference>
<dbReference type="RefSeq" id="YP_358717.1">
    <property type="nucleotide sequence ID" value="NC_007500.1"/>
</dbReference>
<dbReference type="SMR" id="Q3C1L6"/>
<dbReference type="GeneID" id="3735196"/>
<dbReference type="KEGG" id="nsy:3735196"/>
<dbReference type="OrthoDB" id="29082at4085"/>
<dbReference type="Proteomes" id="UP000189701">
    <property type="component" value="Chloroplast Pltd"/>
</dbReference>
<dbReference type="GO" id="GO:0009507">
    <property type="term" value="C:chloroplast"/>
    <property type="evidence" value="ECO:0007669"/>
    <property type="project" value="UniProtKB-SubCell"/>
</dbReference>
<dbReference type="GO" id="GO:0022627">
    <property type="term" value="C:cytosolic small ribosomal subunit"/>
    <property type="evidence" value="ECO:0007669"/>
    <property type="project" value="TreeGrafter"/>
</dbReference>
<dbReference type="GO" id="GO:0019843">
    <property type="term" value="F:rRNA binding"/>
    <property type="evidence" value="ECO:0007669"/>
    <property type="project" value="UniProtKB-UniRule"/>
</dbReference>
<dbReference type="GO" id="GO:0003735">
    <property type="term" value="F:structural constituent of ribosome"/>
    <property type="evidence" value="ECO:0007669"/>
    <property type="project" value="InterPro"/>
</dbReference>
<dbReference type="GO" id="GO:0006412">
    <property type="term" value="P:translation"/>
    <property type="evidence" value="ECO:0007669"/>
    <property type="project" value="UniProtKB-UniRule"/>
</dbReference>
<dbReference type="CDD" id="cd02412">
    <property type="entry name" value="KH-II_30S_S3"/>
    <property type="match status" value="1"/>
</dbReference>
<dbReference type="FunFam" id="3.30.1140.32:FF:000003">
    <property type="entry name" value="30S ribosomal protein S3, chloroplastic"/>
    <property type="match status" value="1"/>
</dbReference>
<dbReference type="FunFam" id="3.30.300.20:FF:000008">
    <property type="entry name" value="30S ribosomal protein S3, chloroplastic"/>
    <property type="match status" value="1"/>
</dbReference>
<dbReference type="Gene3D" id="3.30.300.20">
    <property type="match status" value="1"/>
</dbReference>
<dbReference type="Gene3D" id="3.30.1140.32">
    <property type="entry name" value="Ribosomal protein S3, C-terminal domain"/>
    <property type="match status" value="1"/>
</dbReference>
<dbReference type="HAMAP" id="MF_01309_B">
    <property type="entry name" value="Ribosomal_uS3_B"/>
    <property type="match status" value="1"/>
</dbReference>
<dbReference type="InterPro" id="IPR015946">
    <property type="entry name" value="KH_dom-like_a/b"/>
</dbReference>
<dbReference type="InterPro" id="IPR004044">
    <property type="entry name" value="KH_dom_type_2"/>
</dbReference>
<dbReference type="InterPro" id="IPR009019">
    <property type="entry name" value="KH_sf_prok-type"/>
</dbReference>
<dbReference type="InterPro" id="IPR036419">
    <property type="entry name" value="Ribosomal_S3_C_sf"/>
</dbReference>
<dbReference type="InterPro" id="IPR005704">
    <property type="entry name" value="Ribosomal_uS3_bac-typ"/>
</dbReference>
<dbReference type="InterPro" id="IPR001351">
    <property type="entry name" value="Ribosomal_uS3_C"/>
</dbReference>
<dbReference type="InterPro" id="IPR018280">
    <property type="entry name" value="Ribosomal_uS3_CS"/>
</dbReference>
<dbReference type="NCBIfam" id="TIGR01009">
    <property type="entry name" value="rpsC_bact"/>
    <property type="match status" value="1"/>
</dbReference>
<dbReference type="PANTHER" id="PTHR11760">
    <property type="entry name" value="30S/40S RIBOSOMAL PROTEIN S3"/>
    <property type="match status" value="1"/>
</dbReference>
<dbReference type="PANTHER" id="PTHR11760:SF19">
    <property type="entry name" value="SMALL RIBOSOMAL SUBUNIT PROTEIN US3C"/>
    <property type="match status" value="1"/>
</dbReference>
<dbReference type="Pfam" id="PF00189">
    <property type="entry name" value="Ribosomal_S3_C"/>
    <property type="match status" value="1"/>
</dbReference>
<dbReference type="SUPFAM" id="SSF54814">
    <property type="entry name" value="Prokaryotic type KH domain (KH-domain type II)"/>
    <property type="match status" value="1"/>
</dbReference>
<dbReference type="SUPFAM" id="SSF54821">
    <property type="entry name" value="Ribosomal protein S3 C-terminal domain"/>
    <property type="match status" value="1"/>
</dbReference>
<dbReference type="PROSITE" id="PS50823">
    <property type="entry name" value="KH_TYPE_2"/>
    <property type="match status" value="1"/>
</dbReference>
<dbReference type="PROSITE" id="PS00548">
    <property type="entry name" value="RIBOSOMAL_S3"/>
    <property type="match status" value="1"/>
</dbReference>
<accession>Q3C1L6</accession>
<protein>
    <recommendedName>
        <fullName evidence="2">Small ribosomal subunit protein uS3c</fullName>
    </recommendedName>
    <alternativeName>
        <fullName>30S ribosomal protein S3, chloroplastic</fullName>
    </alternativeName>
</protein>
<comment type="subunit">
    <text evidence="1">Part of the 30S ribosomal subunit.</text>
</comment>
<comment type="subcellular location">
    <subcellularLocation>
        <location>Plastid</location>
        <location>Chloroplast</location>
    </subcellularLocation>
</comment>
<comment type="similarity">
    <text evidence="2">Belongs to the universal ribosomal protein uS3 family.</text>
</comment>
<geneLocation type="chloroplast"/>
<feature type="chain" id="PRO_0000230754" description="Small ribosomal subunit protein uS3c">
    <location>
        <begin position="1"/>
        <end position="218"/>
    </location>
</feature>
<feature type="domain" description="KH type-2">
    <location>
        <begin position="47"/>
        <end position="118"/>
    </location>
</feature>
<reference key="1">
    <citation type="journal article" date="2006" name="Mol. Genet. Genomics">
        <title>The chloroplast genome of Nicotiana sylvestris and Nicotiana tomentosiformis: complete sequencing confirms that the Nicotiana sylvestris progenitor is the maternal genome donor of Nicotiana tabacum.</title>
        <authorList>
            <person name="Yukawa M."/>
            <person name="Tsudzuki T."/>
            <person name="Sugiura M."/>
        </authorList>
    </citation>
    <scope>NUCLEOTIDE SEQUENCE [LARGE SCALE GENOMIC DNA]</scope>
</reference>
<keyword id="KW-0150">Chloroplast</keyword>
<keyword id="KW-0934">Plastid</keyword>
<keyword id="KW-1185">Reference proteome</keyword>
<keyword id="KW-0687">Ribonucleoprotein</keyword>
<keyword id="KW-0689">Ribosomal protein</keyword>
<keyword id="KW-0694">RNA-binding</keyword>
<keyword id="KW-0699">rRNA-binding</keyword>
<sequence>MGQKINPLGFRLGTTQGHHSLWFSQPKNYSEGLQEDQKIRDCIKNYVQKNMRTSSGVEGIARIEIQKRIDLIQVIIFMGFPKLLIESRPRGIEELQTTLQKEFHCVNRKLNIAVTRIAKPYGNPNILAEFIAGQLKNRVSFRKAMKKAIELTEQADTKGIQIQIAGRIDGKEIARVEWIREGRVPLQTIRAKIDYCSYTVRTIYGVLGIKIWIFLDEE</sequence>
<organism>
    <name type="scientific">Nicotiana sylvestris</name>
    <name type="common">Wood tobacco</name>
    <name type="synonym">South American tobacco</name>
    <dbReference type="NCBI Taxonomy" id="4096"/>
    <lineage>
        <taxon>Eukaryota</taxon>
        <taxon>Viridiplantae</taxon>
        <taxon>Streptophyta</taxon>
        <taxon>Embryophyta</taxon>
        <taxon>Tracheophyta</taxon>
        <taxon>Spermatophyta</taxon>
        <taxon>Magnoliopsida</taxon>
        <taxon>eudicotyledons</taxon>
        <taxon>Gunneridae</taxon>
        <taxon>Pentapetalae</taxon>
        <taxon>asterids</taxon>
        <taxon>lamiids</taxon>
        <taxon>Solanales</taxon>
        <taxon>Solanaceae</taxon>
        <taxon>Nicotianoideae</taxon>
        <taxon>Nicotianeae</taxon>
        <taxon>Nicotiana</taxon>
    </lineage>
</organism>
<proteinExistence type="inferred from homology"/>
<name>RR3_NICSY</name>
<evidence type="ECO:0000250" key="1"/>
<evidence type="ECO:0000305" key="2"/>